<feature type="chain" id="PRO_0000059074" description="Thymidine phosphorylase">
    <location>
        <begin position="1"/>
        <end position="442"/>
    </location>
</feature>
<reference key="1">
    <citation type="journal article" date="2003" name="Genome Res.">
        <title>Comparative genome analysis of Vibrio vulnificus, a marine pathogen.</title>
        <authorList>
            <person name="Chen C.-Y."/>
            <person name="Wu K.-M."/>
            <person name="Chang Y.-C."/>
            <person name="Chang C.-H."/>
            <person name="Tsai H.-C."/>
            <person name="Liao T.-L."/>
            <person name="Liu Y.-M."/>
            <person name="Chen H.-J."/>
            <person name="Shen A.B.-T."/>
            <person name="Li J.-C."/>
            <person name="Su T.-L."/>
            <person name="Shao C.-P."/>
            <person name="Lee C.-T."/>
            <person name="Hor L.-I."/>
            <person name="Tsai S.-F."/>
        </authorList>
    </citation>
    <scope>NUCLEOTIDE SEQUENCE [LARGE SCALE GENOMIC DNA]</scope>
    <source>
        <strain>YJ016</strain>
    </source>
</reference>
<keyword id="KW-0328">Glycosyltransferase</keyword>
<keyword id="KW-0808">Transferase</keyword>
<name>TYPH_VIBVY</name>
<sequence length="442" mass="47046">MYLPQEIIRKKRDGEALTADEINFFIQGVANNTVSEGQIAAFAMTIFFNEMTMPERIALTCAMRDSGMVIDWSHMNFGGPIVDKHSTGGVGDVTSLMLGPMVAACGGFVPMISGRGLGHTGGTLDKLEAIPGYNITPSNDVFGQVTKEAGVAIIGQTGDLAPADKRVYATRDITATVDNISLITASILSKKLAAGLESLVMDVKVGSGAFMPTYEASEELAKSIVAVANGAGTKTTAILTDMNQVLASSAGNAVEVREAVRFLKGEYRNPRLLEVTMASCAEMLVLGKLAENTEDARAKLMEVLDNGKAAECFGKMVAGLGGPVDFMDNYDNYLDKAEIIKPVYAKETGVVSAMDTRAIGMAVVAMGGGRRVATDSIDYAVGFDQFIRLGEIASSEKPLAMIHARNEAQWQEAANALQAAIKVGGEYTPTPDVYRQIRQEDI</sequence>
<organism>
    <name type="scientific">Vibrio vulnificus (strain YJ016)</name>
    <dbReference type="NCBI Taxonomy" id="196600"/>
    <lineage>
        <taxon>Bacteria</taxon>
        <taxon>Pseudomonadati</taxon>
        <taxon>Pseudomonadota</taxon>
        <taxon>Gammaproteobacteria</taxon>
        <taxon>Vibrionales</taxon>
        <taxon>Vibrionaceae</taxon>
        <taxon>Vibrio</taxon>
    </lineage>
</organism>
<dbReference type="EC" id="2.4.2.4" evidence="1"/>
<dbReference type="EMBL" id="BA000037">
    <property type="protein sequence ID" value="BAC95442.1"/>
    <property type="status" value="ALT_INIT"/>
    <property type="molecule type" value="Genomic_DNA"/>
</dbReference>
<dbReference type="RefSeq" id="WP_011079643.1">
    <property type="nucleotide sequence ID" value="NC_005139.1"/>
</dbReference>
<dbReference type="SMR" id="Q7MI39"/>
<dbReference type="STRING" id="672.VV93_v1c23990"/>
<dbReference type="GeneID" id="93895973"/>
<dbReference type="KEGG" id="vvy:VV2678"/>
<dbReference type="eggNOG" id="COG0213">
    <property type="taxonomic scope" value="Bacteria"/>
</dbReference>
<dbReference type="HOGENOM" id="CLU_025040_0_1_6"/>
<dbReference type="UniPathway" id="UPA00578">
    <property type="reaction ID" value="UER00638"/>
</dbReference>
<dbReference type="Proteomes" id="UP000002675">
    <property type="component" value="Chromosome I"/>
</dbReference>
<dbReference type="GO" id="GO:0005829">
    <property type="term" value="C:cytosol"/>
    <property type="evidence" value="ECO:0007669"/>
    <property type="project" value="TreeGrafter"/>
</dbReference>
<dbReference type="GO" id="GO:0004645">
    <property type="term" value="F:1,4-alpha-oligoglucan phosphorylase activity"/>
    <property type="evidence" value="ECO:0007669"/>
    <property type="project" value="InterPro"/>
</dbReference>
<dbReference type="GO" id="GO:0009032">
    <property type="term" value="F:thymidine phosphorylase activity"/>
    <property type="evidence" value="ECO:0007669"/>
    <property type="project" value="UniProtKB-UniRule"/>
</dbReference>
<dbReference type="GO" id="GO:0006206">
    <property type="term" value="P:pyrimidine nucleobase metabolic process"/>
    <property type="evidence" value="ECO:0007669"/>
    <property type="project" value="InterPro"/>
</dbReference>
<dbReference type="GO" id="GO:0046104">
    <property type="term" value="P:thymidine metabolic process"/>
    <property type="evidence" value="ECO:0007669"/>
    <property type="project" value="UniProtKB-UniRule"/>
</dbReference>
<dbReference type="FunFam" id="3.40.1030.10:FF:000001">
    <property type="entry name" value="Thymidine phosphorylase"/>
    <property type="match status" value="1"/>
</dbReference>
<dbReference type="FunFam" id="3.90.1170.30:FF:000001">
    <property type="entry name" value="Thymidine phosphorylase"/>
    <property type="match status" value="1"/>
</dbReference>
<dbReference type="Gene3D" id="3.40.1030.10">
    <property type="entry name" value="Nucleoside phosphorylase/phosphoribosyltransferase catalytic domain"/>
    <property type="match status" value="1"/>
</dbReference>
<dbReference type="Gene3D" id="3.90.1170.30">
    <property type="entry name" value="Pyrimidine nucleoside phosphorylase-like, C-terminal domain"/>
    <property type="match status" value="1"/>
</dbReference>
<dbReference type="Gene3D" id="1.20.970.10">
    <property type="entry name" value="Transferase, Pyrimidine Nucleoside Phosphorylase, Chain C"/>
    <property type="match status" value="1"/>
</dbReference>
<dbReference type="HAMAP" id="MF_01628">
    <property type="entry name" value="Thymid_phosp"/>
    <property type="match status" value="1"/>
</dbReference>
<dbReference type="InterPro" id="IPR000312">
    <property type="entry name" value="Glycosyl_Trfase_fam3"/>
</dbReference>
<dbReference type="InterPro" id="IPR017459">
    <property type="entry name" value="Glycosyl_Trfase_fam3_N_dom"/>
</dbReference>
<dbReference type="InterPro" id="IPR036320">
    <property type="entry name" value="Glycosyl_Trfase_fam3_N_dom_sf"/>
</dbReference>
<dbReference type="InterPro" id="IPR035902">
    <property type="entry name" value="Nuc_phospho_transferase"/>
</dbReference>
<dbReference type="InterPro" id="IPR036566">
    <property type="entry name" value="PYNP-like_C_sf"/>
</dbReference>
<dbReference type="InterPro" id="IPR013102">
    <property type="entry name" value="PYNP_C"/>
</dbReference>
<dbReference type="InterPro" id="IPR018090">
    <property type="entry name" value="Pyrmidine_PPas_bac/euk"/>
</dbReference>
<dbReference type="InterPro" id="IPR017872">
    <property type="entry name" value="Pyrmidine_PPase_CS"/>
</dbReference>
<dbReference type="InterPro" id="IPR000053">
    <property type="entry name" value="Thymidine/pyrmidine_PPase"/>
</dbReference>
<dbReference type="InterPro" id="IPR013465">
    <property type="entry name" value="Thymidine_Pase"/>
</dbReference>
<dbReference type="NCBIfam" id="NF004490">
    <property type="entry name" value="PRK05820.1"/>
    <property type="match status" value="1"/>
</dbReference>
<dbReference type="NCBIfam" id="TIGR02643">
    <property type="entry name" value="T_phosphoryl"/>
    <property type="match status" value="1"/>
</dbReference>
<dbReference type="NCBIfam" id="TIGR02644">
    <property type="entry name" value="Y_phosphoryl"/>
    <property type="match status" value="1"/>
</dbReference>
<dbReference type="PANTHER" id="PTHR10515">
    <property type="entry name" value="THYMIDINE PHOSPHORYLASE"/>
    <property type="match status" value="1"/>
</dbReference>
<dbReference type="PANTHER" id="PTHR10515:SF0">
    <property type="entry name" value="THYMIDINE PHOSPHORYLASE"/>
    <property type="match status" value="1"/>
</dbReference>
<dbReference type="Pfam" id="PF02885">
    <property type="entry name" value="Glycos_trans_3N"/>
    <property type="match status" value="1"/>
</dbReference>
<dbReference type="Pfam" id="PF00591">
    <property type="entry name" value="Glycos_transf_3"/>
    <property type="match status" value="1"/>
</dbReference>
<dbReference type="Pfam" id="PF07831">
    <property type="entry name" value="PYNP_C"/>
    <property type="match status" value="1"/>
</dbReference>
<dbReference type="PIRSF" id="PIRSF000478">
    <property type="entry name" value="TP_PyNP"/>
    <property type="match status" value="1"/>
</dbReference>
<dbReference type="SMART" id="SM00941">
    <property type="entry name" value="PYNP_C"/>
    <property type="match status" value="1"/>
</dbReference>
<dbReference type="SUPFAM" id="SSF52418">
    <property type="entry name" value="Nucleoside phosphorylase/phosphoribosyltransferase catalytic domain"/>
    <property type="match status" value="1"/>
</dbReference>
<dbReference type="SUPFAM" id="SSF47648">
    <property type="entry name" value="Nucleoside phosphorylase/phosphoribosyltransferase N-terminal domain"/>
    <property type="match status" value="1"/>
</dbReference>
<dbReference type="SUPFAM" id="SSF54680">
    <property type="entry name" value="Pyrimidine nucleoside phosphorylase C-terminal domain"/>
    <property type="match status" value="1"/>
</dbReference>
<dbReference type="PROSITE" id="PS00647">
    <property type="entry name" value="THYMID_PHOSPHORYLASE"/>
    <property type="match status" value="1"/>
</dbReference>
<accession>Q7MI39</accession>
<evidence type="ECO:0000255" key="1">
    <source>
        <dbReference type="HAMAP-Rule" id="MF_01628"/>
    </source>
</evidence>
<evidence type="ECO:0000305" key="2"/>
<proteinExistence type="inferred from homology"/>
<protein>
    <recommendedName>
        <fullName evidence="1">Thymidine phosphorylase</fullName>
        <ecNumber evidence="1">2.4.2.4</ecNumber>
    </recommendedName>
    <alternativeName>
        <fullName evidence="1">TdRPase</fullName>
    </alternativeName>
</protein>
<gene>
    <name evidence="1" type="primary">deoA</name>
    <name type="ordered locus">VV2678</name>
</gene>
<comment type="function">
    <text evidence="1">The enzymes which catalyze the reversible phosphorolysis of pyrimidine nucleosides are involved in the degradation of these compounds and in their utilization as carbon and energy sources, or in the rescue of pyrimidine bases for nucleotide synthesis.</text>
</comment>
<comment type="catalytic activity">
    <reaction evidence="1">
        <text>thymidine + phosphate = 2-deoxy-alpha-D-ribose 1-phosphate + thymine</text>
        <dbReference type="Rhea" id="RHEA:16037"/>
        <dbReference type="ChEBI" id="CHEBI:17748"/>
        <dbReference type="ChEBI" id="CHEBI:17821"/>
        <dbReference type="ChEBI" id="CHEBI:43474"/>
        <dbReference type="ChEBI" id="CHEBI:57259"/>
        <dbReference type="EC" id="2.4.2.4"/>
    </reaction>
</comment>
<comment type="pathway">
    <text evidence="1">Pyrimidine metabolism; dTMP biosynthesis via salvage pathway; dTMP from thymine: step 1/2.</text>
</comment>
<comment type="subunit">
    <text evidence="1">Homodimer.</text>
</comment>
<comment type="similarity">
    <text evidence="1">Belongs to the thymidine/pyrimidine-nucleoside phosphorylase family.</text>
</comment>
<comment type="sequence caution" evidence="2">
    <conflict type="erroneous initiation">
        <sequence resource="EMBL-CDS" id="BAC95442"/>
    </conflict>
</comment>